<gene>
    <name type="primary">Prdm10</name>
    <name type="synonym">Gm1112</name>
    <name type="synonym">Tris</name>
</gene>
<reference key="1">
    <citation type="journal article" date="2005" name="Science">
        <title>The transcriptional landscape of the mammalian genome.</title>
        <authorList>
            <person name="Carninci P."/>
            <person name="Kasukawa T."/>
            <person name="Katayama S."/>
            <person name="Gough J."/>
            <person name="Frith M.C."/>
            <person name="Maeda N."/>
            <person name="Oyama R."/>
            <person name="Ravasi T."/>
            <person name="Lenhard B."/>
            <person name="Wells C."/>
            <person name="Kodzius R."/>
            <person name="Shimokawa K."/>
            <person name="Bajic V.B."/>
            <person name="Brenner S.E."/>
            <person name="Batalov S."/>
            <person name="Forrest A.R."/>
            <person name="Zavolan M."/>
            <person name="Davis M.J."/>
            <person name="Wilming L.G."/>
            <person name="Aidinis V."/>
            <person name="Allen J.E."/>
            <person name="Ambesi-Impiombato A."/>
            <person name="Apweiler R."/>
            <person name="Aturaliya R.N."/>
            <person name="Bailey T.L."/>
            <person name="Bansal M."/>
            <person name="Baxter L."/>
            <person name="Beisel K.W."/>
            <person name="Bersano T."/>
            <person name="Bono H."/>
            <person name="Chalk A.M."/>
            <person name="Chiu K.P."/>
            <person name="Choudhary V."/>
            <person name="Christoffels A."/>
            <person name="Clutterbuck D.R."/>
            <person name="Crowe M.L."/>
            <person name="Dalla E."/>
            <person name="Dalrymple B.P."/>
            <person name="de Bono B."/>
            <person name="Della Gatta G."/>
            <person name="di Bernardo D."/>
            <person name="Down T."/>
            <person name="Engstrom P."/>
            <person name="Fagiolini M."/>
            <person name="Faulkner G."/>
            <person name="Fletcher C.F."/>
            <person name="Fukushima T."/>
            <person name="Furuno M."/>
            <person name="Futaki S."/>
            <person name="Gariboldi M."/>
            <person name="Georgii-Hemming P."/>
            <person name="Gingeras T.R."/>
            <person name="Gojobori T."/>
            <person name="Green R.E."/>
            <person name="Gustincich S."/>
            <person name="Harbers M."/>
            <person name="Hayashi Y."/>
            <person name="Hensch T.K."/>
            <person name="Hirokawa N."/>
            <person name="Hill D."/>
            <person name="Huminiecki L."/>
            <person name="Iacono M."/>
            <person name="Ikeo K."/>
            <person name="Iwama A."/>
            <person name="Ishikawa T."/>
            <person name="Jakt M."/>
            <person name="Kanapin A."/>
            <person name="Katoh M."/>
            <person name="Kawasawa Y."/>
            <person name="Kelso J."/>
            <person name="Kitamura H."/>
            <person name="Kitano H."/>
            <person name="Kollias G."/>
            <person name="Krishnan S.P."/>
            <person name="Kruger A."/>
            <person name="Kummerfeld S.K."/>
            <person name="Kurochkin I.V."/>
            <person name="Lareau L.F."/>
            <person name="Lazarevic D."/>
            <person name="Lipovich L."/>
            <person name="Liu J."/>
            <person name="Liuni S."/>
            <person name="McWilliam S."/>
            <person name="Madan Babu M."/>
            <person name="Madera M."/>
            <person name="Marchionni L."/>
            <person name="Matsuda H."/>
            <person name="Matsuzawa S."/>
            <person name="Miki H."/>
            <person name="Mignone F."/>
            <person name="Miyake S."/>
            <person name="Morris K."/>
            <person name="Mottagui-Tabar S."/>
            <person name="Mulder N."/>
            <person name="Nakano N."/>
            <person name="Nakauchi H."/>
            <person name="Ng P."/>
            <person name="Nilsson R."/>
            <person name="Nishiguchi S."/>
            <person name="Nishikawa S."/>
            <person name="Nori F."/>
            <person name="Ohara O."/>
            <person name="Okazaki Y."/>
            <person name="Orlando V."/>
            <person name="Pang K.C."/>
            <person name="Pavan W.J."/>
            <person name="Pavesi G."/>
            <person name="Pesole G."/>
            <person name="Petrovsky N."/>
            <person name="Piazza S."/>
            <person name="Reed J."/>
            <person name="Reid J.F."/>
            <person name="Ring B.Z."/>
            <person name="Ringwald M."/>
            <person name="Rost B."/>
            <person name="Ruan Y."/>
            <person name="Salzberg S.L."/>
            <person name="Sandelin A."/>
            <person name="Schneider C."/>
            <person name="Schoenbach C."/>
            <person name="Sekiguchi K."/>
            <person name="Semple C.A."/>
            <person name="Seno S."/>
            <person name="Sessa L."/>
            <person name="Sheng Y."/>
            <person name="Shibata Y."/>
            <person name="Shimada H."/>
            <person name="Shimada K."/>
            <person name="Silva D."/>
            <person name="Sinclair B."/>
            <person name="Sperling S."/>
            <person name="Stupka E."/>
            <person name="Sugiura K."/>
            <person name="Sultana R."/>
            <person name="Takenaka Y."/>
            <person name="Taki K."/>
            <person name="Tammoja K."/>
            <person name="Tan S.L."/>
            <person name="Tang S."/>
            <person name="Taylor M.S."/>
            <person name="Tegner J."/>
            <person name="Teichmann S.A."/>
            <person name="Ueda H.R."/>
            <person name="van Nimwegen E."/>
            <person name="Verardo R."/>
            <person name="Wei C.L."/>
            <person name="Yagi K."/>
            <person name="Yamanishi H."/>
            <person name="Zabarovsky E."/>
            <person name="Zhu S."/>
            <person name="Zimmer A."/>
            <person name="Hide W."/>
            <person name="Bult C."/>
            <person name="Grimmond S.M."/>
            <person name="Teasdale R.D."/>
            <person name="Liu E.T."/>
            <person name="Brusic V."/>
            <person name="Quackenbush J."/>
            <person name="Wahlestedt C."/>
            <person name="Mattick J.S."/>
            <person name="Hume D.A."/>
            <person name="Kai C."/>
            <person name="Sasaki D."/>
            <person name="Tomaru Y."/>
            <person name="Fukuda S."/>
            <person name="Kanamori-Katayama M."/>
            <person name="Suzuki M."/>
            <person name="Aoki J."/>
            <person name="Arakawa T."/>
            <person name="Iida J."/>
            <person name="Imamura K."/>
            <person name="Itoh M."/>
            <person name="Kato T."/>
            <person name="Kawaji H."/>
            <person name="Kawagashira N."/>
            <person name="Kawashima T."/>
            <person name="Kojima M."/>
            <person name="Kondo S."/>
            <person name="Konno H."/>
            <person name="Nakano K."/>
            <person name="Ninomiya N."/>
            <person name="Nishio T."/>
            <person name="Okada M."/>
            <person name="Plessy C."/>
            <person name="Shibata K."/>
            <person name="Shiraki T."/>
            <person name="Suzuki S."/>
            <person name="Tagami M."/>
            <person name="Waki K."/>
            <person name="Watahiki A."/>
            <person name="Okamura-Oho Y."/>
            <person name="Suzuki H."/>
            <person name="Kawai J."/>
            <person name="Hayashizaki Y."/>
        </authorList>
    </citation>
    <scope>NUCLEOTIDE SEQUENCE [LARGE SCALE MRNA] (ISOFORM 2)</scope>
    <source>
        <strain>C57BL/6J</strain>
        <tissue>Cerebellum</tissue>
    </source>
</reference>
<reference key="2">
    <citation type="journal article" date="2009" name="PLoS Biol.">
        <title>Lineage-specific biology revealed by a finished genome assembly of the mouse.</title>
        <authorList>
            <person name="Church D.M."/>
            <person name="Goodstadt L."/>
            <person name="Hillier L.W."/>
            <person name="Zody M.C."/>
            <person name="Goldstein S."/>
            <person name="She X."/>
            <person name="Bult C.J."/>
            <person name="Agarwala R."/>
            <person name="Cherry J.L."/>
            <person name="DiCuccio M."/>
            <person name="Hlavina W."/>
            <person name="Kapustin Y."/>
            <person name="Meric P."/>
            <person name="Maglott D."/>
            <person name="Birtle Z."/>
            <person name="Marques A.C."/>
            <person name="Graves T."/>
            <person name="Zhou S."/>
            <person name="Teague B."/>
            <person name="Potamousis K."/>
            <person name="Churas C."/>
            <person name="Place M."/>
            <person name="Herschleb J."/>
            <person name="Runnheim R."/>
            <person name="Forrest D."/>
            <person name="Amos-Landgraf J."/>
            <person name="Schwartz D.C."/>
            <person name="Cheng Z."/>
            <person name="Lindblad-Toh K."/>
            <person name="Eichler E.E."/>
            <person name="Ponting C.P."/>
        </authorList>
    </citation>
    <scope>NUCLEOTIDE SEQUENCE [LARGE SCALE GENOMIC DNA]</scope>
    <source>
        <strain>C57BL/6J</strain>
    </source>
</reference>
<reference key="3">
    <citation type="journal article" date="2004" name="Genome Res.">
        <title>The status, quality, and expansion of the NIH full-length cDNA project: the Mammalian Gene Collection (MGC).</title>
        <authorList>
            <consortium name="The MGC Project Team"/>
        </authorList>
    </citation>
    <scope>NUCLEOTIDE SEQUENCE [LARGE SCALE MRNA] (ISOFORM 2)</scope>
    <source>
        <strain>C57BL/6J</strain>
        <tissue>Thymus</tissue>
    </source>
</reference>
<reference key="4">
    <citation type="journal article" date="2002" name="Int. J. Dev. Neurosci.">
        <title>Ectopic dendrite initiation: CNS pathogenesis as a model of CNS development.</title>
        <authorList>
            <person name="Siegel D.A."/>
            <person name="Huang M.K."/>
            <person name="Becker S.F."/>
        </authorList>
    </citation>
    <scope>SUBCELLULAR LOCATION</scope>
    <scope>TISSUE SPECIFICITY</scope>
</reference>
<reference key="5">
    <citation type="journal article" date="2003" name="Int. J. Dev. Neurosci.">
        <authorList>
            <person name="Siegel D.A."/>
            <person name="Huang M.K."/>
            <person name="Becker S.F."/>
        </authorList>
    </citation>
    <scope>ERRATUM OF PUBMED:12175877</scope>
</reference>
<reference key="6">
    <citation type="journal article" date="2007" name="Science">
        <title>ATM and ATR substrate analysis reveals extensive protein networks responsive to DNA damage.</title>
        <authorList>
            <person name="Matsuoka S."/>
            <person name="Ballif B.A."/>
            <person name="Smogorzewska A."/>
            <person name="McDonald E.R. III"/>
            <person name="Hurov K.E."/>
            <person name="Luo J."/>
            <person name="Bakalarski C.E."/>
            <person name="Zhao Z."/>
            <person name="Solimini N."/>
            <person name="Lerenthal Y."/>
            <person name="Shiloh Y."/>
            <person name="Gygi S.P."/>
            <person name="Elledge S.J."/>
        </authorList>
    </citation>
    <scope>PHOSPHORYLATION [LARGE SCALE ANALYSIS] AT THR-422</scope>
    <scope>IDENTIFICATION BY MASS SPECTROMETRY [LARGE SCALE ANALYSIS]</scope>
    <source>
        <tissue>Embryonic fibroblast</tissue>
    </source>
</reference>
<reference key="7">
    <citation type="journal article" date="2010" name="Cell">
        <title>A tissue-specific atlas of mouse protein phosphorylation and expression.</title>
        <authorList>
            <person name="Huttlin E.L."/>
            <person name="Jedrychowski M.P."/>
            <person name="Elias J.E."/>
            <person name="Goswami T."/>
            <person name="Rad R."/>
            <person name="Beausoleil S.A."/>
            <person name="Villen J."/>
            <person name="Haas W."/>
            <person name="Sowa M.E."/>
            <person name="Gygi S.P."/>
        </authorList>
    </citation>
    <scope>IDENTIFICATION BY MASS SPECTROMETRY [LARGE SCALE ANALYSIS]</scope>
    <source>
        <tissue>Kidney</tissue>
        <tissue>Lung</tissue>
    </source>
</reference>
<reference key="8">
    <citation type="journal article" date="2020" name="Nat. Commun.">
        <title>Global translation during early development depends on the essential transcription factor PRDM10.</title>
        <authorList>
            <person name="Han B.Y."/>
            <person name="Seah M.K.Y."/>
            <person name="Brooks I.R."/>
            <person name="Quek D.H.P."/>
            <person name="Huxley D.R."/>
            <person name="Foo C.S."/>
            <person name="Lee L.T."/>
            <person name="Wollmann H."/>
            <person name="Guo H."/>
            <person name="Messerschmidt D.M."/>
            <person name="Guccione E."/>
        </authorList>
    </citation>
    <scope>FUNCTION</scope>
    <scope>DISRUPTION PHENOTYPE</scope>
    <scope>REGIONS</scope>
</reference>
<accession>Q3UTQ7</accession>
<accession>Q6P397</accession>
<comment type="function">
    <text evidence="1 6">Transcriptional activator, essential for early embryonic development and survival of embryonic stem cells (ESCs) (PubMed:32681107). Supports cell growth and survival during early development by transcriptionally activating the expression of the translation initiation factor EIF3B, to sustain global translation (PubMed:32681107). Activates the transcription of FLNC (By similarity).</text>
</comment>
<comment type="subcellular location">
    <subcellularLocation>
        <location evidence="1">Nucleus</location>
    </subcellularLocation>
</comment>
<comment type="alternative products">
    <event type="alternative splicing"/>
    <isoform>
        <id>Q3UTQ7-1</id>
        <name>1</name>
        <sequence type="displayed"/>
    </isoform>
    <isoform>
        <id>Q3UTQ7-2</id>
        <name>2</name>
        <sequence type="described" ref="VSP_036382 VSP_036383"/>
    </isoform>
</comment>
<comment type="tissue specificity">
    <text evidence="5">Present in brain, liver, kidney, spleen and thymus (at protein level).</text>
</comment>
<comment type="domain">
    <text>The SET domain is degenerated, suggesting that it has lost methyltransferase activity.</text>
</comment>
<comment type="disruption phenotype">
    <text evidence="6">Embryonic lethality observed during the preimplantation stages (PubMed:32681107). A significant down-regulation of EIF3B transcript seen in embyros and embryonic stem cells (ESCs) and ESCs exhibit severely impaired proliferation and growth failure (PubMed:32681107).</text>
</comment>
<comment type="similarity">
    <text evidence="3">Belongs to the class V-like SAM-binding methyltransferase superfamily.</text>
</comment>
<sequence length="1184" mass="133746">MDPKDESAHVWPTSADHEQSTAQVHFVPDAGTVAQIVYTDDQVRPPQQVVYTADGASYTSVDGPEHTLVYIHPVEAAQTLFTDPAQVAYVQQDATAQQVLPSIESVHGSDPLATLQNPIARLDAKEEEEEEEDEDEDTEEEEEEDAEDTDVDDWQPDPPRPFDPHDLWCEECNNAHSSVCPKHGPLHPIPNRPVLTRARASLPLVLYIDRFLGGVFSKRRIPKRTQFGPVEGPLVRGSELKDCYIHLKVSLDKGDRKDRDLHEDLWFELSDETLCNWMMFVRPAQNHLEQNLVAYQYGHHVYYTTIKNVEPKQELKVWYAASYAEFVNQKIHDISEEERKVLREQEKNWPCYECNRRFISSEQLQQHLNSHDEKLDVFTRTRGRGRGRGKRRFGPGRRPGRPPKFIRLEITSENGEKSDDGTQDLLHFPTKEQFDEAEPATLNGLDQPEQASIPIPQLPQETPPSLEQEPETHTLHLQPQQEESLVPTQTTLTADDMRRAKRIRNAALQHLFIRKSFRPFKCLQCGKAFREKDKLDQHLRFHGREGNCPLTCDLCNKGFISSASLESHMKLHSDQKTYSCIFCPESFDRLDLLKDHVAIHVNDGCFTCPTCKKRFPDFIQVKKHVRSFHSEKIYQCTECDKAFCRPDKLRLHMLRHSDRKDFLCSTCGKQFKRKDKLREHMQRMHNPEREAKKADRISRSKTFKPRITSTDYDSFTFKCRLCMMGFRRRGMLVNHLSKRHPDMKIEEVPELTLPIIKPNRDYFCQYCDKNEMSYFALSKKVALYIAFMVKYLTLQVYKSASKRKAHILKNHPGAELPPSIRKLRPAGPGEPDPMLSTHTQLTGTIATPPVCCPHCSKQYSSKTKMVQHIRKKHPEYAQLPNTIHTPLTTAVISATPAVLTTDSATGETVVTTDLLTQAMTELSQTLTTDYRTPQGDYQRIQYIPVSQSASGLQQPQHIQLQVVQVAPATSPHQSQQSTVDVGQLHDPQTYTQHAIQVQHIQVTEPAPAAPSASQVAGQPLSPSAQQVQQGLSPSHIQGSSSTQGQALQQQQNSSVQHTYLPNAWNSFRGYSAVSAGDTSHESASEIQMMTLPPGQFVITDSGVATPVTSGQVKAVTPGHYVLSESQPELEEKQASALSGAVQVQPSAHSDSLDSTGPSQQQTTQYIITTTTNGNGGSEVHITKP</sequence>
<keyword id="KW-0010">Activator</keyword>
<keyword id="KW-0025">Alternative splicing</keyword>
<keyword id="KW-0238">DNA-binding</keyword>
<keyword id="KW-1017">Isopeptide bond</keyword>
<keyword id="KW-0479">Metal-binding</keyword>
<keyword id="KW-0539">Nucleus</keyword>
<keyword id="KW-0597">Phosphoprotein</keyword>
<keyword id="KW-1185">Reference proteome</keyword>
<keyword id="KW-0677">Repeat</keyword>
<keyword id="KW-0804">Transcription</keyword>
<keyword id="KW-0805">Transcription regulation</keyword>
<keyword id="KW-0832">Ubl conjugation</keyword>
<keyword id="KW-0862">Zinc</keyword>
<keyword id="KW-0863">Zinc-finger</keyword>
<evidence type="ECO:0000250" key="1">
    <source>
        <dbReference type="UniProtKB" id="Q9NQV6"/>
    </source>
</evidence>
<evidence type="ECO:0000255" key="2">
    <source>
        <dbReference type="PROSITE-ProRule" id="PRU00042"/>
    </source>
</evidence>
<evidence type="ECO:0000255" key="3">
    <source>
        <dbReference type="PROSITE-ProRule" id="PRU00190"/>
    </source>
</evidence>
<evidence type="ECO:0000256" key="4">
    <source>
        <dbReference type="SAM" id="MobiDB-lite"/>
    </source>
</evidence>
<evidence type="ECO:0000269" key="5">
    <source>
    </source>
</evidence>
<evidence type="ECO:0000269" key="6">
    <source>
    </source>
</evidence>
<evidence type="ECO:0000303" key="7">
    <source>
    </source>
</evidence>
<evidence type="ECO:0000303" key="8">
    <source>
    </source>
</evidence>
<evidence type="ECO:0000305" key="9"/>
<evidence type="ECO:0000305" key="10">
    <source>
    </source>
</evidence>
<evidence type="ECO:0007744" key="11">
    <source>
    </source>
</evidence>
<protein>
    <recommendedName>
        <fullName>PR domain zinc finger protein 10</fullName>
    </recommendedName>
    <alternativeName>
        <fullName>PR domain-containing protein 10</fullName>
    </alternativeName>
    <alternativeName>
        <fullName>Tristanin</fullName>
    </alternativeName>
</protein>
<dbReference type="EMBL" id="AK139221">
    <property type="protein sequence ID" value="BAE23923.1"/>
    <property type="molecule type" value="mRNA"/>
</dbReference>
<dbReference type="EMBL" id="AC167244">
    <property type="status" value="NOT_ANNOTATED_CDS"/>
    <property type="molecule type" value="Genomic_DNA"/>
</dbReference>
<dbReference type="EMBL" id="BC064128">
    <property type="protein sequence ID" value="AAH64128.1"/>
    <property type="molecule type" value="mRNA"/>
</dbReference>
<dbReference type="CCDS" id="CCDS90529.1">
    <molecule id="Q3UTQ7-2"/>
</dbReference>
<dbReference type="RefSeq" id="NP_001398366.1">
    <molecule id="Q3UTQ7-2"/>
    <property type="nucleotide sequence ID" value="NM_001411437.1"/>
</dbReference>
<dbReference type="RefSeq" id="NP_955019.1">
    <molecule id="Q3UTQ7-2"/>
    <property type="nucleotide sequence ID" value="NM_199315.2"/>
</dbReference>
<dbReference type="SMR" id="Q3UTQ7"/>
<dbReference type="FunCoup" id="Q3UTQ7">
    <property type="interactions" value="2566"/>
</dbReference>
<dbReference type="STRING" id="10090.ENSMUSP00000074104"/>
<dbReference type="GlyGen" id="Q3UTQ7">
    <property type="glycosylation" value="2 sites"/>
</dbReference>
<dbReference type="iPTMnet" id="Q3UTQ7"/>
<dbReference type="PhosphoSitePlus" id="Q3UTQ7"/>
<dbReference type="PaxDb" id="10090-ENSMUSP00000074104"/>
<dbReference type="PeptideAtlas" id="Q3UTQ7"/>
<dbReference type="ProteomicsDB" id="289835">
    <molecule id="Q3UTQ7-1"/>
</dbReference>
<dbReference type="ProteomicsDB" id="289836">
    <molecule id="Q3UTQ7-2"/>
</dbReference>
<dbReference type="Pumba" id="Q3UTQ7"/>
<dbReference type="Antibodypedia" id="19222">
    <property type="antibodies" value="230 antibodies from 33 providers"/>
</dbReference>
<dbReference type="Ensembl" id="ENSMUST00000117389.8">
    <molecule id="Q3UTQ7-2"/>
    <property type="protein sequence ID" value="ENSMUSP00000112588.2"/>
    <property type="gene ID" value="ENSMUSG00000042496.19"/>
</dbReference>
<dbReference type="UCSC" id="uc009oro.1">
    <molecule id="Q3UTQ7-2"/>
    <property type="organism name" value="mouse"/>
</dbReference>
<dbReference type="AGR" id="MGI:2682952"/>
<dbReference type="MGI" id="MGI:2682952">
    <property type="gene designation" value="Prdm10"/>
</dbReference>
<dbReference type="VEuPathDB" id="HostDB:ENSMUSG00000042496"/>
<dbReference type="eggNOG" id="KOG1721">
    <property type="taxonomic scope" value="Eukaryota"/>
</dbReference>
<dbReference type="GeneTree" id="ENSGT00940000158740"/>
<dbReference type="HOGENOM" id="CLU_749978_0_0_1"/>
<dbReference type="InParanoid" id="Q3UTQ7"/>
<dbReference type="PhylomeDB" id="Q3UTQ7"/>
<dbReference type="ChiTaRS" id="Prdm10">
    <property type="organism name" value="mouse"/>
</dbReference>
<dbReference type="PRO" id="PR:Q3UTQ7"/>
<dbReference type="Proteomes" id="UP000000589">
    <property type="component" value="Chromosome 9"/>
</dbReference>
<dbReference type="RNAct" id="Q3UTQ7">
    <property type="molecule type" value="protein"/>
</dbReference>
<dbReference type="Bgee" id="ENSMUSG00000042496">
    <property type="expression patterns" value="Expressed in animal zygote and 213 other cell types or tissues"/>
</dbReference>
<dbReference type="ExpressionAtlas" id="Q3UTQ7">
    <property type="expression patterns" value="baseline and differential"/>
</dbReference>
<dbReference type="GO" id="GO:0000785">
    <property type="term" value="C:chromatin"/>
    <property type="evidence" value="ECO:0000250"/>
    <property type="project" value="UniProtKB"/>
</dbReference>
<dbReference type="GO" id="GO:0005634">
    <property type="term" value="C:nucleus"/>
    <property type="evidence" value="ECO:0000250"/>
    <property type="project" value="UniProtKB"/>
</dbReference>
<dbReference type="GO" id="GO:0003677">
    <property type="term" value="F:DNA binding"/>
    <property type="evidence" value="ECO:0007669"/>
    <property type="project" value="UniProtKB-KW"/>
</dbReference>
<dbReference type="GO" id="GO:0003700">
    <property type="term" value="F:DNA-binding transcription factor activity"/>
    <property type="evidence" value="ECO:0000250"/>
    <property type="project" value="UniProtKB"/>
</dbReference>
<dbReference type="GO" id="GO:0008168">
    <property type="term" value="F:methyltransferase activity"/>
    <property type="evidence" value="ECO:0007669"/>
    <property type="project" value="UniProtKB-KW"/>
</dbReference>
<dbReference type="GO" id="GO:0008270">
    <property type="term" value="F:zinc ion binding"/>
    <property type="evidence" value="ECO:0007669"/>
    <property type="project" value="UniProtKB-KW"/>
</dbReference>
<dbReference type="GO" id="GO:0032259">
    <property type="term" value="P:methylation"/>
    <property type="evidence" value="ECO:0007669"/>
    <property type="project" value="UniProtKB-KW"/>
</dbReference>
<dbReference type="GO" id="GO:0045893">
    <property type="term" value="P:positive regulation of DNA-templated transcription"/>
    <property type="evidence" value="ECO:0000250"/>
    <property type="project" value="UniProtKB"/>
</dbReference>
<dbReference type="CDD" id="cd19194">
    <property type="entry name" value="PR-SET_PRDM10"/>
    <property type="match status" value="1"/>
</dbReference>
<dbReference type="FunFam" id="2.170.270.10:FF:000007">
    <property type="entry name" value="PR domain zinc finger protein 10"/>
    <property type="match status" value="1"/>
</dbReference>
<dbReference type="FunFam" id="3.30.160.60:FF:000287">
    <property type="entry name" value="PR domain zinc finger protein 10"/>
    <property type="match status" value="1"/>
</dbReference>
<dbReference type="FunFam" id="3.30.160.60:FF:000347">
    <property type="entry name" value="PR domain zinc finger protein 10"/>
    <property type="match status" value="1"/>
</dbReference>
<dbReference type="FunFam" id="3.30.160.60:FF:000411">
    <property type="entry name" value="PR domain zinc finger protein 10"/>
    <property type="match status" value="1"/>
</dbReference>
<dbReference type="FunFam" id="3.30.160.60:FF:000413">
    <property type="entry name" value="PR domain zinc finger protein 10"/>
    <property type="match status" value="1"/>
</dbReference>
<dbReference type="FunFam" id="3.30.160.60:FF:000428">
    <property type="entry name" value="PR domain zinc finger protein 10"/>
    <property type="match status" value="1"/>
</dbReference>
<dbReference type="Gene3D" id="3.30.160.60">
    <property type="entry name" value="Classic Zinc Finger"/>
    <property type="match status" value="6"/>
</dbReference>
<dbReference type="Gene3D" id="2.170.270.10">
    <property type="entry name" value="SET domain"/>
    <property type="match status" value="1"/>
</dbReference>
<dbReference type="InterPro" id="IPR044403">
    <property type="entry name" value="PRDM10_PR/SET"/>
</dbReference>
<dbReference type="InterPro" id="IPR001214">
    <property type="entry name" value="SET_dom"/>
</dbReference>
<dbReference type="InterPro" id="IPR046341">
    <property type="entry name" value="SET_dom_sf"/>
</dbReference>
<dbReference type="InterPro" id="IPR050688">
    <property type="entry name" value="Zinc_finger/UBP_domain"/>
</dbReference>
<dbReference type="InterPro" id="IPR036236">
    <property type="entry name" value="Znf_C2H2_sf"/>
</dbReference>
<dbReference type="InterPro" id="IPR013087">
    <property type="entry name" value="Znf_C2H2_type"/>
</dbReference>
<dbReference type="PANTHER" id="PTHR24403:SF48">
    <property type="entry name" value="PR DOMAIN ZINC FINGER PROTEIN 10"/>
    <property type="match status" value="1"/>
</dbReference>
<dbReference type="PANTHER" id="PTHR24403">
    <property type="entry name" value="ZINC FINGER PROTEIN"/>
    <property type="match status" value="1"/>
</dbReference>
<dbReference type="Pfam" id="PF21549">
    <property type="entry name" value="PRDM2_PR"/>
    <property type="match status" value="1"/>
</dbReference>
<dbReference type="Pfam" id="PF00096">
    <property type="entry name" value="zf-C2H2"/>
    <property type="match status" value="4"/>
</dbReference>
<dbReference type="Pfam" id="PF12874">
    <property type="entry name" value="zf-met"/>
    <property type="match status" value="1"/>
</dbReference>
<dbReference type="SMART" id="SM00355">
    <property type="entry name" value="ZnF_C2H2"/>
    <property type="match status" value="9"/>
</dbReference>
<dbReference type="SUPFAM" id="SSF57667">
    <property type="entry name" value="beta-beta-alpha zinc fingers"/>
    <property type="match status" value="4"/>
</dbReference>
<dbReference type="SUPFAM" id="SSF82199">
    <property type="entry name" value="SET domain"/>
    <property type="match status" value="1"/>
</dbReference>
<dbReference type="PROSITE" id="PS50280">
    <property type="entry name" value="SET"/>
    <property type="match status" value="1"/>
</dbReference>
<dbReference type="PROSITE" id="PS00028">
    <property type="entry name" value="ZINC_FINGER_C2H2_1"/>
    <property type="match status" value="9"/>
</dbReference>
<dbReference type="PROSITE" id="PS50157">
    <property type="entry name" value="ZINC_FINGER_C2H2_2"/>
    <property type="match status" value="9"/>
</dbReference>
<name>PRD10_MOUSE</name>
<feature type="chain" id="PRO_0000363963" description="PR domain zinc finger protein 10">
    <location>
        <begin position="1"/>
        <end position="1184"/>
    </location>
</feature>
<feature type="domain" description="SET" evidence="3">
    <location>
        <begin position="202"/>
        <end position="320"/>
    </location>
</feature>
<feature type="zinc finger region" description="C2H2-type 1" evidence="2">
    <location>
        <begin position="349"/>
        <end position="371"/>
    </location>
</feature>
<feature type="zinc finger region" description="C2H2-type 2" evidence="2">
    <location>
        <begin position="520"/>
        <end position="542"/>
    </location>
</feature>
<feature type="zinc finger region" description="C2H2-type 3" evidence="2">
    <location>
        <begin position="550"/>
        <end position="572"/>
    </location>
</feature>
<feature type="zinc finger region" description="C2H2-type 4" evidence="2">
    <location>
        <begin position="578"/>
        <end position="600"/>
    </location>
</feature>
<feature type="zinc finger region" description="C2H2-type 5" evidence="2">
    <location>
        <begin position="606"/>
        <end position="629"/>
    </location>
</feature>
<feature type="zinc finger region" description="C2H2-type 6" evidence="2">
    <location>
        <begin position="634"/>
        <end position="656"/>
    </location>
</feature>
<feature type="zinc finger region" description="C2H2-type 7" evidence="2">
    <location>
        <begin position="662"/>
        <end position="685"/>
    </location>
</feature>
<feature type="zinc finger region" description="C2H2-type 8" evidence="2">
    <location>
        <begin position="717"/>
        <end position="740"/>
    </location>
</feature>
<feature type="zinc finger region" description="C2H2-type 9" evidence="2">
    <location>
        <begin position="850"/>
        <end position="873"/>
    </location>
</feature>
<feature type="region of interest" description="Disordered" evidence="4">
    <location>
        <begin position="122"/>
        <end position="162"/>
    </location>
</feature>
<feature type="region of interest" description="N-terminal PR domain; essential for transcriptional activator activity" evidence="10">
    <location>
        <begin position="221"/>
        <end position="325"/>
    </location>
</feature>
<feature type="region of interest" description="Disordered" evidence="4">
    <location>
        <begin position="381"/>
        <end position="405"/>
    </location>
</feature>
<feature type="region of interest" description="Disordered" evidence="4">
    <location>
        <begin position="444"/>
        <end position="487"/>
    </location>
</feature>
<feature type="region of interest" description="C-terminal glutamine-rich region; essential for transcriptional activator activity" evidence="10">
    <location>
        <begin position="917"/>
        <end position="1164"/>
    </location>
</feature>
<feature type="region of interest" description="Disordered" evidence="4">
    <location>
        <begin position="1004"/>
        <end position="1054"/>
    </location>
</feature>
<feature type="compositionally biased region" description="Acidic residues" evidence="4">
    <location>
        <begin position="125"/>
        <end position="155"/>
    </location>
</feature>
<feature type="compositionally biased region" description="Basic residues" evidence="4">
    <location>
        <begin position="381"/>
        <end position="401"/>
    </location>
</feature>
<feature type="compositionally biased region" description="Polar residues" evidence="4">
    <location>
        <begin position="475"/>
        <end position="487"/>
    </location>
</feature>
<feature type="compositionally biased region" description="Polar residues" evidence="4">
    <location>
        <begin position="1014"/>
        <end position="1036"/>
    </location>
</feature>
<feature type="compositionally biased region" description="Low complexity" evidence="4">
    <location>
        <begin position="1037"/>
        <end position="1054"/>
    </location>
</feature>
<feature type="modified residue" description="Phosphoserine" evidence="1">
    <location>
        <position position="418"/>
    </location>
</feature>
<feature type="modified residue" description="Phosphothreonine" evidence="11">
    <location>
        <position position="422"/>
    </location>
</feature>
<feature type="cross-link" description="Glycyl lysine isopeptide (Lys-Gly) (interchain with G-Cter in SUMO2)" evidence="1">
    <location>
        <position position="374"/>
    </location>
</feature>
<feature type="splice variant" id="VSP_036382" description="In isoform 2." evidence="7 8">
    <original>WYAASYAEFVNQKIHDISEEERKV</original>
    <variation>QNWIHSCLPARVMIRALSYKRILP</variation>
    <location>
        <begin position="318"/>
        <end position="341"/>
    </location>
</feature>
<feature type="splice variant" id="VSP_036383" description="In isoform 2." evidence="7 8">
    <location>
        <begin position="342"/>
        <end position="1184"/>
    </location>
</feature>
<feature type="sequence conflict" description="In Ref. 1; BAE23923." evidence="9" ref="1">
    <original>F</original>
    <variation>S</variation>
    <location>
        <position position="227"/>
    </location>
</feature>
<proteinExistence type="evidence at protein level"/>
<organism>
    <name type="scientific">Mus musculus</name>
    <name type="common">Mouse</name>
    <dbReference type="NCBI Taxonomy" id="10090"/>
    <lineage>
        <taxon>Eukaryota</taxon>
        <taxon>Metazoa</taxon>
        <taxon>Chordata</taxon>
        <taxon>Craniata</taxon>
        <taxon>Vertebrata</taxon>
        <taxon>Euteleostomi</taxon>
        <taxon>Mammalia</taxon>
        <taxon>Eutheria</taxon>
        <taxon>Euarchontoglires</taxon>
        <taxon>Glires</taxon>
        <taxon>Rodentia</taxon>
        <taxon>Myomorpha</taxon>
        <taxon>Muroidea</taxon>
        <taxon>Muridae</taxon>
        <taxon>Murinae</taxon>
        <taxon>Mus</taxon>
        <taxon>Mus</taxon>
    </lineage>
</organism>